<proteinExistence type="evidence at transcript level"/>
<keyword id="KW-0025">Alternative splicing</keyword>
<keyword id="KW-0067">ATP-binding</keyword>
<keyword id="KW-0325">Glycoprotein</keyword>
<keyword id="KW-0418">Kinase</keyword>
<keyword id="KW-0472">Membrane</keyword>
<keyword id="KW-0547">Nucleotide-binding</keyword>
<keyword id="KW-0597">Phosphoprotein</keyword>
<keyword id="KW-0675">Receptor</keyword>
<keyword id="KW-1185">Reference proteome</keyword>
<keyword id="KW-0677">Repeat</keyword>
<keyword id="KW-0723">Serine/threonine-protein kinase</keyword>
<keyword id="KW-0732">Signal</keyword>
<keyword id="KW-0808">Transferase</keyword>
<keyword id="KW-0812">Transmembrane</keyword>
<keyword id="KW-1133">Transmembrane helix</keyword>
<protein>
    <recommendedName>
        <fullName>Cysteine-rich receptor-like protein kinase 40</fullName>
        <shortName>Cysteine-rich RLK40</shortName>
        <ecNumber>2.7.11.-</ecNumber>
    </recommendedName>
</protein>
<feature type="signal peptide" evidence="2">
    <location>
        <begin position="1"/>
        <end position="27"/>
    </location>
</feature>
<feature type="chain" id="PRO_0000295087" description="Cysteine-rich receptor-like protein kinase 40">
    <location>
        <begin position="28"/>
        <end position="654"/>
    </location>
</feature>
<feature type="topological domain" description="Extracellular" evidence="2">
    <location>
        <begin position="28"/>
        <end position="287"/>
    </location>
</feature>
<feature type="transmembrane region" description="Helical" evidence="2">
    <location>
        <begin position="288"/>
        <end position="308"/>
    </location>
</feature>
<feature type="topological domain" description="Cytoplasmic" evidence="2">
    <location>
        <begin position="309"/>
        <end position="654"/>
    </location>
</feature>
<feature type="domain" description="Gnk2-homologous 1" evidence="4">
    <location>
        <begin position="28"/>
        <end position="131"/>
    </location>
</feature>
<feature type="domain" description="Gnk2-homologous 2" evidence="4">
    <location>
        <begin position="143"/>
        <end position="250"/>
    </location>
</feature>
<feature type="domain" description="Protein kinase" evidence="3">
    <location>
        <begin position="348"/>
        <end position="619"/>
    </location>
</feature>
<feature type="active site" description="Proton acceptor" evidence="3 5">
    <location>
        <position position="473"/>
    </location>
</feature>
<feature type="binding site" evidence="3">
    <location>
        <begin position="354"/>
        <end position="362"/>
    </location>
    <ligand>
        <name>ATP</name>
        <dbReference type="ChEBI" id="CHEBI:30616"/>
    </ligand>
</feature>
<feature type="binding site" evidence="3">
    <location>
        <position position="376"/>
    </location>
    <ligand>
        <name>ATP</name>
        <dbReference type="ChEBI" id="CHEBI:30616"/>
    </ligand>
</feature>
<feature type="modified residue" description="Phosphotyrosine" evidence="1">
    <location>
        <position position="421"/>
    </location>
</feature>
<feature type="modified residue" description="Phosphoserine" evidence="1">
    <location>
        <position position="477"/>
    </location>
</feature>
<feature type="modified residue" description="Phosphothreonine" evidence="1">
    <location>
        <position position="513"/>
    </location>
</feature>
<feature type="modified residue" description="Phosphotyrosine" evidence="1">
    <location>
        <position position="521"/>
    </location>
</feature>
<feature type="glycosylation site" description="N-linked (GlcNAc...) asparagine" evidence="2">
    <location>
        <position position="38"/>
    </location>
</feature>
<feature type="glycosylation site" description="N-linked (GlcNAc...) asparagine" evidence="2">
    <location>
        <position position="65"/>
    </location>
</feature>
<feature type="glycosylation site" description="N-linked (GlcNAc...) asparagine" evidence="2">
    <location>
        <position position="128"/>
    </location>
</feature>
<feature type="glycosylation site" description="N-linked (GlcNAc...) asparagine" evidence="2">
    <location>
        <position position="154"/>
    </location>
</feature>
<feature type="glycosylation site" description="N-linked (GlcNAc...) asparagine" evidence="2">
    <location>
        <position position="167"/>
    </location>
</feature>
<feature type="glycosylation site" description="N-linked (GlcNAc...) asparagine" evidence="2">
    <location>
        <position position="256"/>
    </location>
</feature>
<sequence>MGKCSALMIFLSSSLLLVLQTLHVVNAVKCFGNSFNGNSSTFAQNRQKLFPTLADKVIINDGFYNASLGQDPDKVYALVSCARGYDQDACYNCVQSLTQNTLTDCRSRRDSFIWGGNDDVTCLVRSSNQSTFGSVQLKPPVVWPSPDTIESSKNITLFKQQWEEMVNRTLEAATKAEGSSVLKYYKAEKAGFTEFPDVYMLMQCTPDLSSRDCKQCLGDCVMYFRKDYMGRKGGMASLPSCYFRWDLYSFHNAFDNVTRVPAPPPRPHAQEKESCITVKKGKSIGYGGIIAIVVVFTFINLLVFIGFIKVYARRGKLNNVGSAEYSDSDGQFMLRFDLGMIVMATDDFSSENTLGQGGFGTVYKGTFPNGQEVAVKRLTKGSGQGDMEFKNEVSLLTRLQHKNLVKLLGFCNEGDEEILVYEFVPNSSLDHFIFDEDKRSLLTWEVRFRIIEGIARGLLYLHEDSQLKIIHRDLKASNILLDAEMNPKVADFGTARLFDSDETRAETKRIAGTRGYMAPEYLNHGQISAKSDVYSFGVMLLEMISGERNNSFEGEGLAAFAWKRWVEGKPEIIIDPFLIENPRNEIIKLIQIGLLCVQENSTKRPTMSSVIIWLGSETIIIPLPKAPAFTWIRSQSESGAMSLSDDVFTELSCR</sequence>
<evidence type="ECO:0000250" key="1">
    <source>
        <dbReference type="UniProtKB" id="O48814"/>
    </source>
</evidence>
<evidence type="ECO:0000255" key="2"/>
<evidence type="ECO:0000255" key="3">
    <source>
        <dbReference type="PROSITE-ProRule" id="PRU00159"/>
    </source>
</evidence>
<evidence type="ECO:0000255" key="4">
    <source>
        <dbReference type="PROSITE-ProRule" id="PRU00806"/>
    </source>
</evidence>
<evidence type="ECO:0000255" key="5">
    <source>
        <dbReference type="PROSITE-ProRule" id="PRU10027"/>
    </source>
</evidence>
<evidence type="ECO:0000305" key="6"/>
<organism>
    <name type="scientific">Arabidopsis thaliana</name>
    <name type="common">Mouse-ear cress</name>
    <dbReference type="NCBI Taxonomy" id="3702"/>
    <lineage>
        <taxon>Eukaryota</taxon>
        <taxon>Viridiplantae</taxon>
        <taxon>Streptophyta</taxon>
        <taxon>Embryophyta</taxon>
        <taxon>Tracheophyta</taxon>
        <taxon>Spermatophyta</taxon>
        <taxon>Magnoliopsida</taxon>
        <taxon>eudicotyledons</taxon>
        <taxon>Gunneridae</taxon>
        <taxon>Pentapetalae</taxon>
        <taxon>rosids</taxon>
        <taxon>malvids</taxon>
        <taxon>Brassicales</taxon>
        <taxon>Brassicaceae</taxon>
        <taxon>Camelineae</taxon>
        <taxon>Arabidopsis</taxon>
    </lineage>
</organism>
<name>CRK40_ARATH</name>
<accession>Q9SYS3</accession>
<reference key="1">
    <citation type="journal article" date="1999" name="Nature">
        <title>Sequence and analysis of chromosome 4 of the plant Arabidopsis thaliana.</title>
        <authorList>
            <person name="Mayer K.F.X."/>
            <person name="Schueller C."/>
            <person name="Wambutt R."/>
            <person name="Murphy G."/>
            <person name="Volckaert G."/>
            <person name="Pohl T."/>
            <person name="Duesterhoeft A."/>
            <person name="Stiekema W."/>
            <person name="Entian K.-D."/>
            <person name="Terryn N."/>
            <person name="Harris B."/>
            <person name="Ansorge W."/>
            <person name="Brandt P."/>
            <person name="Grivell L.A."/>
            <person name="Rieger M."/>
            <person name="Weichselgartner M."/>
            <person name="de Simone V."/>
            <person name="Obermaier B."/>
            <person name="Mache R."/>
            <person name="Mueller M."/>
            <person name="Kreis M."/>
            <person name="Delseny M."/>
            <person name="Puigdomenech P."/>
            <person name="Watson M."/>
            <person name="Schmidtheini T."/>
            <person name="Reichert B."/>
            <person name="Portetelle D."/>
            <person name="Perez-Alonso M."/>
            <person name="Boutry M."/>
            <person name="Bancroft I."/>
            <person name="Vos P."/>
            <person name="Hoheisel J."/>
            <person name="Zimmermann W."/>
            <person name="Wedler H."/>
            <person name="Ridley P."/>
            <person name="Langham S.-A."/>
            <person name="McCullagh B."/>
            <person name="Bilham L."/>
            <person name="Robben J."/>
            <person name="van der Schueren J."/>
            <person name="Grymonprez B."/>
            <person name="Chuang Y.-J."/>
            <person name="Vandenbussche F."/>
            <person name="Braeken M."/>
            <person name="Weltjens I."/>
            <person name="Voet M."/>
            <person name="Bastiaens I."/>
            <person name="Aert R."/>
            <person name="Defoor E."/>
            <person name="Weitzenegger T."/>
            <person name="Bothe G."/>
            <person name="Ramsperger U."/>
            <person name="Hilbert H."/>
            <person name="Braun M."/>
            <person name="Holzer E."/>
            <person name="Brandt A."/>
            <person name="Peters S."/>
            <person name="van Staveren M."/>
            <person name="Dirkse W."/>
            <person name="Mooijman P."/>
            <person name="Klein Lankhorst R."/>
            <person name="Rose M."/>
            <person name="Hauf J."/>
            <person name="Koetter P."/>
            <person name="Berneiser S."/>
            <person name="Hempel S."/>
            <person name="Feldpausch M."/>
            <person name="Lamberth S."/>
            <person name="Van den Daele H."/>
            <person name="De Keyser A."/>
            <person name="Buysshaert C."/>
            <person name="Gielen J."/>
            <person name="Villarroel R."/>
            <person name="De Clercq R."/>
            <person name="van Montagu M."/>
            <person name="Rogers J."/>
            <person name="Cronin A."/>
            <person name="Quail M.A."/>
            <person name="Bray-Allen S."/>
            <person name="Clark L."/>
            <person name="Doggett J."/>
            <person name="Hall S."/>
            <person name="Kay M."/>
            <person name="Lennard N."/>
            <person name="McLay K."/>
            <person name="Mayes R."/>
            <person name="Pettett A."/>
            <person name="Rajandream M.A."/>
            <person name="Lyne M."/>
            <person name="Benes V."/>
            <person name="Rechmann S."/>
            <person name="Borkova D."/>
            <person name="Bloecker H."/>
            <person name="Scharfe M."/>
            <person name="Grimm M."/>
            <person name="Loehnert T.-H."/>
            <person name="Dose S."/>
            <person name="de Haan M."/>
            <person name="Maarse A.C."/>
            <person name="Schaefer M."/>
            <person name="Mueller-Auer S."/>
            <person name="Gabel C."/>
            <person name="Fuchs M."/>
            <person name="Fartmann B."/>
            <person name="Granderath K."/>
            <person name="Dauner D."/>
            <person name="Herzl A."/>
            <person name="Neumann S."/>
            <person name="Argiriou A."/>
            <person name="Vitale D."/>
            <person name="Liguori R."/>
            <person name="Piravandi E."/>
            <person name="Massenet O."/>
            <person name="Quigley F."/>
            <person name="Clabauld G."/>
            <person name="Muendlein A."/>
            <person name="Felber R."/>
            <person name="Schnabl S."/>
            <person name="Hiller R."/>
            <person name="Schmidt W."/>
            <person name="Lecharny A."/>
            <person name="Aubourg S."/>
            <person name="Chefdor F."/>
            <person name="Cooke R."/>
            <person name="Berger C."/>
            <person name="Monfort A."/>
            <person name="Casacuberta E."/>
            <person name="Gibbons T."/>
            <person name="Weber N."/>
            <person name="Vandenbol M."/>
            <person name="Bargues M."/>
            <person name="Terol J."/>
            <person name="Torres A."/>
            <person name="Perez-Perez A."/>
            <person name="Purnelle B."/>
            <person name="Bent E."/>
            <person name="Johnson S."/>
            <person name="Tacon D."/>
            <person name="Jesse T."/>
            <person name="Heijnen L."/>
            <person name="Schwarz S."/>
            <person name="Scholler P."/>
            <person name="Heber S."/>
            <person name="Francs P."/>
            <person name="Bielke C."/>
            <person name="Frishman D."/>
            <person name="Haase D."/>
            <person name="Lemcke K."/>
            <person name="Mewes H.-W."/>
            <person name="Stocker S."/>
            <person name="Zaccaria P."/>
            <person name="Bevan M."/>
            <person name="Wilson R.K."/>
            <person name="de la Bastide M."/>
            <person name="Habermann K."/>
            <person name="Parnell L."/>
            <person name="Dedhia N."/>
            <person name="Gnoj L."/>
            <person name="Schutz K."/>
            <person name="Huang E."/>
            <person name="Spiegel L."/>
            <person name="Sekhon M."/>
            <person name="Murray J."/>
            <person name="Sheet P."/>
            <person name="Cordes M."/>
            <person name="Abu-Threideh J."/>
            <person name="Stoneking T."/>
            <person name="Kalicki J."/>
            <person name="Graves T."/>
            <person name="Harmon G."/>
            <person name="Edwards J."/>
            <person name="Latreille P."/>
            <person name="Courtney L."/>
            <person name="Cloud J."/>
            <person name="Abbott A."/>
            <person name="Scott K."/>
            <person name="Johnson D."/>
            <person name="Minx P."/>
            <person name="Bentley D."/>
            <person name="Fulton B."/>
            <person name="Miller N."/>
            <person name="Greco T."/>
            <person name="Kemp K."/>
            <person name="Kramer J."/>
            <person name="Fulton L."/>
            <person name="Mardis E."/>
            <person name="Dante M."/>
            <person name="Pepin K."/>
            <person name="Hillier L.W."/>
            <person name="Nelson J."/>
            <person name="Spieth J."/>
            <person name="Ryan E."/>
            <person name="Andrews S."/>
            <person name="Geisel C."/>
            <person name="Layman D."/>
            <person name="Du H."/>
            <person name="Ali J."/>
            <person name="Berghoff A."/>
            <person name="Jones K."/>
            <person name="Drone K."/>
            <person name="Cotton M."/>
            <person name="Joshu C."/>
            <person name="Antonoiu B."/>
            <person name="Zidanic M."/>
            <person name="Strong C."/>
            <person name="Sun H."/>
            <person name="Lamar B."/>
            <person name="Yordan C."/>
            <person name="Ma P."/>
            <person name="Zhong J."/>
            <person name="Preston R."/>
            <person name="Vil D."/>
            <person name="Shekher M."/>
            <person name="Matero A."/>
            <person name="Shah R."/>
            <person name="Swaby I.K."/>
            <person name="O'Shaughnessy A."/>
            <person name="Rodriguez M."/>
            <person name="Hoffman J."/>
            <person name="Till S."/>
            <person name="Granat S."/>
            <person name="Shohdy N."/>
            <person name="Hasegawa A."/>
            <person name="Hameed A."/>
            <person name="Lodhi M."/>
            <person name="Johnson A."/>
            <person name="Chen E."/>
            <person name="Marra M.A."/>
            <person name="Martienssen R."/>
            <person name="McCombie W.R."/>
        </authorList>
    </citation>
    <scope>NUCLEOTIDE SEQUENCE [LARGE SCALE GENOMIC DNA]</scope>
    <source>
        <strain>cv. Columbia</strain>
    </source>
</reference>
<reference key="2">
    <citation type="journal article" date="2017" name="Plant J.">
        <title>Araport11: a complete reannotation of the Arabidopsis thaliana reference genome.</title>
        <authorList>
            <person name="Cheng C.Y."/>
            <person name="Krishnakumar V."/>
            <person name="Chan A.P."/>
            <person name="Thibaud-Nissen F."/>
            <person name="Schobel S."/>
            <person name="Town C.D."/>
        </authorList>
    </citation>
    <scope>GENOME REANNOTATION</scope>
    <source>
        <strain>cv. Columbia</strain>
    </source>
</reference>
<reference key="3">
    <citation type="journal article" date="2003" name="Science">
        <title>Empirical analysis of transcriptional activity in the Arabidopsis genome.</title>
        <authorList>
            <person name="Yamada K."/>
            <person name="Lim J."/>
            <person name="Dale J.M."/>
            <person name="Chen H."/>
            <person name="Shinn P."/>
            <person name="Palm C.J."/>
            <person name="Southwick A.M."/>
            <person name="Wu H.C."/>
            <person name="Kim C.J."/>
            <person name="Nguyen M."/>
            <person name="Pham P.K."/>
            <person name="Cheuk R.F."/>
            <person name="Karlin-Newmann G."/>
            <person name="Liu S.X."/>
            <person name="Lam B."/>
            <person name="Sakano H."/>
            <person name="Wu T."/>
            <person name="Yu G."/>
            <person name="Miranda M."/>
            <person name="Quach H.L."/>
            <person name="Tripp M."/>
            <person name="Chang C.H."/>
            <person name="Lee J.M."/>
            <person name="Toriumi M.J."/>
            <person name="Chan M.M."/>
            <person name="Tang C.C."/>
            <person name="Onodera C.S."/>
            <person name="Deng J.M."/>
            <person name="Akiyama K."/>
            <person name="Ansari Y."/>
            <person name="Arakawa T."/>
            <person name="Banh J."/>
            <person name="Banno F."/>
            <person name="Bowser L."/>
            <person name="Brooks S.Y."/>
            <person name="Carninci P."/>
            <person name="Chao Q."/>
            <person name="Choy N."/>
            <person name="Enju A."/>
            <person name="Goldsmith A.D."/>
            <person name="Gurjal M."/>
            <person name="Hansen N.F."/>
            <person name="Hayashizaki Y."/>
            <person name="Johnson-Hopson C."/>
            <person name="Hsuan V.W."/>
            <person name="Iida K."/>
            <person name="Karnes M."/>
            <person name="Khan S."/>
            <person name="Koesema E."/>
            <person name="Ishida J."/>
            <person name="Jiang P.X."/>
            <person name="Jones T."/>
            <person name="Kawai J."/>
            <person name="Kamiya A."/>
            <person name="Meyers C."/>
            <person name="Nakajima M."/>
            <person name="Narusaka M."/>
            <person name="Seki M."/>
            <person name="Sakurai T."/>
            <person name="Satou M."/>
            <person name="Tamse R."/>
            <person name="Vaysberg M."/>
            <person name="Wallender E.K."/>
            <person name="Wong C."/>
            <person name="Yamamura Y."/>
            <person name="Yuan S."/>
            <person name="Shinozaki K."/>
            <person name="Davis R.W."/>
            <person name="Theologis A."/>
            <person name="Ecker J.R."/>
        </authorList>
    </citation>
    <scope>NUCLEOTIDE SEQUENCE [LARGE SCALE MRNA]</scope>
    <source>
        <strain>cv. Columbia</strain>
    </source>
</reference>
<reference key="4">
    <citation type="journal article" date="2001" name="Plant Physiol.">
        <title>A superfamily of proteins with novel cysteine-rich repeats.</title>
        <authorList>
            <person name="Chen Z."/>
        </authorList>
    </citation>
    <scope>GENE FAMILY ORGANIZATION</scope>
    <scope>NOMENCLATURE</scope>
</reference>
<comment type="catalytic activity">
    <reaction>
        <text>L-seryl-[protein] + ATP = O-phospho-L-seryl-[protein] + ADP + H(+)</text>
        <dbReference type="Rhea" id="RHEA:17989"/>
        <dbReference type="Rhea" id="RHEA-COMP:9863"/>
        <dbReference type="Rhea" id="RHEA-COMP:11604"/>
        <dbReference type="ChEBI" id="CHEBI:15378"/>
        <dbReference type="ChEBI" id="CHEBI:29999"/>
        <dbReference type="ChEBI" id="CHEBI:30616"/>
        <dbReference type="ChEBI" id="CHEBI:83421"/>
        <dbReference type="ChEBI" id="CHEBI:456216"/>
    </reaction>
</comment>
<comment type="catalytic activity">
    <reaction>
        <text>L-threonyl-[protein] + ATP = O-phospho-L-threonyl-[protein] + ADP + H(+)</text>
        <dbReference type="Rhea" id="RHEA:46608"/>
        <dbReference type="Rhea" id="RHEA-COMP:11060"/>
        <dbReference type="Rhea" id="RHEA-COMP:11605"/>
        <dbReference type="ChEBI" id="CHEBI:15378"/>
        <dbReference type="ChEBI" id="CHEBI:30013"/>
        <dbReference type="ChEBI" id="CHEBI:30616"/>
        <dbReference type="ChEBI" id="CHEBI:61977"/>
        <dbReference type="ChEBI" id="CHEBI:456216"/>
    </reaction>
</comment>
<comment type="subcellular location">
    <subcellularLocation>
        <location evidence="6">Membrane</location>
        <topology evidence="6">Single-pass membrane protein</topology>
    </subcellularLocation>
</comment>
<comment type="alternative products">
    <event type="alternative splicing"/>
    <isoform>
        <id>Q9SYS3-1</id>
        <name>1</name>
        <sequence type="displayed"/>
    </isoform>
    <text>A number of isoforms are produced. According to EST sequences.</text>
</comment>
<comment type="similarity">
    <text evidence="3">Belongs to the protein kinase superfamily. Ser/Thr protein kinase family. CRK subfamily.</text>
</comment>
<dbReference type="EC" id="2.7.11.-"/>
<dbReference type="EMBL" id="AF074021">
    <property type="protein sequence ID" value="AAD29771.1"/>
    <property type="molecule type" value="Genomic_DNA"/>
</dbReference>
<dbReference type="EMBL" id="AL161501">
    <property type="protein sequence ID" value="CAB80822.1"/>
    <property type="molecule type" value="Genomic_DNA"/>
</dbReference>
<dbReference type="EMBL" id="CP002687">
    <property type="protein sequence ID" value="AEE82398.1"/>
    <property type="molecule type" value="Genomic_DNA"/>
</dbReference>
<dbReference type="EMBL" id="AY127017">
    <property type="protein sequence ID" value="AAM83241.1"/>
    <property type="molecule type" value="mRNA"/>
</dbReference>
<dbReference type="PIR" id="F85057">
    <property type="entry name" value="F85057"/>
</dbReference>
<dbReference type="RefSeq" id="NP_192366.1">
    <molecule id="Q9SYS3-1"/>
    <property type="nucleotide sequence ID" value="NM_116695.3"/>
</dbReference>
<dbReference type="SMR" id="Q9SYS3"/>
<dbReference type="BioGRID" id="11100">
    <property type="interactions" value="20"/>
</dbReference>
<dbReference type="FunCoup" id="Q9SYS3">
    <property type="interactions" value="7"/>
</dbReference>
<dbReference type="IntAct" id="Q9SYS3">
    <property type="interactions" value="22"/>
</dbReference>
<dbReference type="STRING" id="3702.Q9SYS3"/>
<dbReference type="GlyCosmos" id="Q9SYS3">
    <property type="glycosylation" value="6 sites, No reported glycans"/>
</dbReference>
<dbReference type="GlyGen" id="Q9SYS3">
    <property type="glycosylation" value="6 sites"/>
</dbReference>
<dbReference type="PaxDb" id="3702-AT4G04570.1"/>
<dbReference type="ProteomicsDB" id="220345">
    <molecule id="Q9SYS3-1"/>
</dbReference>
<dbReference type="EnsemblPlants" id="AT4G04570.1">
    <molecule id="Q9SYS3-1"/>
    <property type="protein sequence ID" value="AT4G04570.1"/>
    <property type="gene ID" value="AT4G04570"/>
</dbReference>
<dbReference type="GeneID" id="825789"/>
<dbReference type="Gramene" id="AT4G04570.1">
    <molecule id="Q9SYS3-1"/>
    <property type="protein sequence ID" value="AT4G04570.1"/>
    <property type="gene ID" value="AT4G04570"/>
</dbReference>
<dbReference type="KEGG" id="ath:AT4G04570"/>
<dbReference type="Araport" id="AT4G04570"/>
<dbReference type="TAIR" id="AT4G04570">
    <property type="gene designation" value="CRK40"/>
</dbReference>
<dbReference type="eggNOG" id="ENOG502SE86">
    <property type="taxonomic scope" value="Eukaryota"/>
</dbReference>
<dbReference type="HOGENOM" id="CLU_000288_35_2_1"/>
<dbReference type="InParanoid" id="Q9SYS3"/>
<dbReference type="PhylomeDB" id="Q9SYS3"/>
<dbReference type="PRO" id="PR:Q9SYS3"/>
<dbReference type="Proteomes" id="UP000006548">
    <property type="component" value="Chromosome 4"/>
</dbReference>
<dbReference type="ExpressionAtlas" id="Q9SYS3">
    <property type="expression patterns" value="baseline and differential"/>
</dbReference>
<dbReference type="GO" id="GO:0016020">
    <property type="term" value="C:membrane"/>
    <property type="evidence" value="ECO:0007669"/>
    <property type="project" value="UniProtKB-SubCell"/>
</dbReference>
<dbReference type="GO" id="GO:0005524">
    <property type="term" value="F:ATP binding"/>
    <property type="evidence" value="ECO:0007669"/>
    <property type="project" value="UniProtKB-KW"/>
</dbReference>
<dbReference type="GO" id="GO:0106310">
    <property type="term" value="F:protein serine kinase activity"/>
    <property type="evidence" value="ECO:0007669"/>
    <property type="project" value="RHEA"/>
</dbReference>
<dbReference type="GO" id="GO:0004674">
    <property type="term" value="F:protein serine/threonine kinase activity"/>
    <property type="evidence" value="ECO:0007669"/>
    <property type="project" value="UniProtKB-KW"/>
</dbReference>
<dbReference type="CDD" id="cd23509">
    <property type="entry name" value="Gnk2-like"/>
    <property type="match status" value="2"/>
</dbReference>
<dbReference type="CDD" id="cd14066">
    <property type="entry name" value="STKc_IRAK"/>
    <property type="match status" value="1"/>
</dbReference>
<dbReference type="FunFam" id="3.30.200.20:FF:000142">
    <property type="entry name" value="Cysteine-rich receptor-like protein kinase 10"/>
    <property type="match status" value="1"/>
</dbReference>
<dbReference type="FunFam" id="3.30.430.20:FF:000007">
    <property type="entry name" value="Cysteine-rich receptor-like protein kinase 11"/>
    <property type="match status" value="1"/>
</dbReference>
<dbReference type="FunFam" id="1.10.510.10:FF:000343">
    <property type="entry name" value="Cysteine-rich receptor-like protein kinase 28"/>
    <property type="match status" value="1"/>
</dbReference>
<dbReference type="FunFam" id="3.30.430.20:FF:000009">
    <property type="entry name" value="Cysteine-rich receptor-like protein kinase 28"/>
    <property type="match status" value="1"/>
</dbReference>
<dbReference type="Gene3D" id="3.30.430.20">
    <property type="entry name" value="Gnk2 domain, C-X8-C-X2-C motif"/>
    <property type="match status" value="2"/>
</dbReference>
<dbReference type="Gene3D" id="3.30.200.20">
    <property type="entry name" value="Phosphorylase Kinase, domain 1"/>
    <property type="match status" value="1"/>
</dbReference>
<dbReference type="Gene3D" id="1.10.510.10">
    <property type="entry name" value="Transferase(Phosphotransferase) domain 1"/>
    <property type="match status" value="1"/>
</dbReference>
<dbReference type="InterPro" id="IPR002902">
    <property type="entry name" value="GNK2"/>
</dbReference>
<dbReference type="InterPro" id="IPR038408">
    <property type="entry name" value="GNK2_sf"/>
</dbReference>
<dbReference type="InterPro" id="IPR011009">
    <property type="entry name" value="Kinase-like_dom_sf"/>
</dbReference>
<dbReference type="InterPro" id="IPR000719">
    <property type="entry name" value="Prot_kinase_dom"/>
</dbReference>
<dbReference type="InterPro" id="IPR017441">
    <property type="entry name" value="Protein_kinase_ATP_BS"/>
</dbReference>
<dbReference type="InterPro" id="IPR008271">
    <property type="entry name" value="Ser/Thr_kinase_AS"/>
</dbReference>
<dbReference type="PANTHER" id="PTHR27002:SF1008">
    <property type="entry name" value="CYSTEINE-RICH RECEPTOR-LIKE PROTEIN KINASE 40-RELATED"/>
    <property type="match status" value="1"/>
</dbReference>
<dbReference type="PANTHER" id="PTHR27002">
    <property type="entry name" value="RECEPTOR-LIKE SERINE/THREONINE-PROTEIN KINASE SD1-8"/>
    <property type="match status" value="1"/>
</dbReference>
<dbReference type="Pfam" id="PF00069">
    <property type="entry name" value="Pkinase"/>
    <property type="match status" value="1"/>
</dbReference>
<dbReference type="Pfam" id="PF01657">
    <property type="entry name" value="Stress-antifung"/>
    <property type="match status" value="2"/>
</dbReference>
<dbReference type="SMART" id="SM00220">
    <property type="entry name" value="S_TKc"/>
    <property type="match status" value="1"/>
</dbReference>
<dbReference type="SUPFAM" id="SSF56112">
    <property type="entry name" value="Protein kinase-like (PK-like)"/>
    <property type="match status" value="1"/>
</dbReference>
<dbReference type="PROSITE" id="PS51473">
    <property type="entry name" value="GNK2"/>
    <property type="match status" value="2"/>
</dbReference>
<dbReference type="PROSITE" id="PS00107">
    <property type="entry name" value="PROTEIN_KINASE_ATP"/>
    <property type="match status" value="1"/>
</dbReference>
<dbReference type="PROSITE" id="PS50011">
    <property type="entry name" value="PROTEIN_KINASE_DOM"/>
    <property type="match status" value="1"/>
</dbReference>
<dbReference type="PROSITE" id="PS00108">
    <property type="entry name" value="PROTEIN_KINASE_ST"/>
    <property type="match status" value="1"/>
</dbReference>
<gene>
    <name type="primary">CRK40</name>
    <name type="ordered locus">At4g04570</name>
    <name type="ORF">F4H6.9</name>
</gene>